<keyword id="KW-0963">Cytoplasm</keyword>
<keyword id="KW-0704">Schiff base</keyword>
<keyword id="KW-0784">Thiamine biosynthesis</keyword>
<keyword id="KW-0808">Transferase</keyword>
<feature type="chain" id="PRO_0000162783" description="Thiazole synthase">
    <location>
        <begin position="1"/>
        <end position="258"/>
    </location>
</feature>
<feature type="active site" description="Schiff-base intermediate with DXP" evidence="1">
    <location>
        <position position="97"/>
    </location>
</feature>
<feature type="binding site" evidence="1">
    <location>
        <position position="158"/>
    </location>
    <ligand>
        <name>1-deoxy-D-xylulose 5-phosphate</name>
        <dbReference type="ChEBI" id="CHEBI:57792"/>
    </ligand>
</feature>
<feature type="binding site" evidence="1">
    <location>
        <begin position="184"/>
        <end position="185"/>
    </location>
    <ligand>
        <name>1-deoxy-D-xylulose 5-phosphate</name>
        <dbReference type="ChEBI" id="CHEBI:57792"/>
    </ligand>
</feature>
<feature type="binding site" evidence="1">
    <location>
        <begin position="206"/>
        <end position="207"/>
    </location>
    <ligand>
        <name>1-deoxy-D-xylulose 5-phosphate</name>
        <dbReference type="ChEBI" id="CHEBI:57792"/>
    </ligand>
</feature>
<proteinExistence type="inferred from homology"/>
<evidence type="ECO:0000255" key="1">
    <source>
        <dbReference type="HAMAP-Rule" id="MF_00443"/>
    </source>
</evidence>
<comment type="function">
    <text evidence="1">Catalyzes the rearrangement of 1-deoxy-D-xylulose 5-phosphate (DXP) to produce the thiazole phosphate moiety of thiamine. Sulfur is provided by the thiocarboxylate moiety of the carrier protein ThiS. In vitro, sulfur can be provided by H(2)S.</text>
</comment>
<comment type="catalytic activity">
    <reaction evidence="1">
        <text>[ThiS sulfur-carrier protein]-C-terminal-Gly-aminoethanethioate + 2-iminoacetate + 1-deoxy-D-xylulose 5-phosphate = [ThiS sulfur-carrier protein]-C-terminal Gly-Gly + 2-[(2R,5Z)-2-carboxy-4-methylthiazol-5(2H)-ylidene]ethyl phosphate + 2 H2O + H(+)</text>
        <dbReference type="Rhea" id="RHEA:26297"/>
        <dbReference type="Rhea" id="RHEA-COMP:12909"/>
        <dbReference type="Rhea" id="RHEA-COMP:19908"/>
        <dbReference type="ChEBI" id="CHEBI:15377"/>
        <dbReference type="ChEBI" id="CHEBI:15378"/>
        <dbReference type="ChEBI" id="CHEBI:57792"/>
        <dbReference type="ChEBI" id="CHEBI:62899"/>
        <dbReference type="ChEBI" id="CHEBI:77846"/>
        <dbReference type="ChEBI" id="CHEBI:90778"/>
        <dbReference type="ChEBI" id="CHEBI:232372"/>
        <dbReference type="EC" id="2.8.1.10"/>
    </reaction>
</comment>
<comment type="pathway">
    <text evidence="1">Cofactor biosynthesis; thiamine diphosphate biosynthesis.</text>
</comment>
<comment type="subunit">
    <text evidence="1">Homotetramer. Forms heterodimers with either ThiH or ThiS.</text>
</comment>
<comment type="subcellular location">
    <subcellularLocation>
        <location evidence="1">Cytoplasm</location>
    </subcellularLocation>
</comment>
<comment type="similarity">
    <text evidence="1">Belongs to the ThiG family.</text>
</comment>
<protein>
    <recommendedName>
        <fullName evidence="1">Thiazole synthase</fullName>
        <ecNumber evidence="1">2.8.1.10</ecNumber>
    </recommendedName>
</protein>
<sequence length="258" mass="27614">MEKLIIAGREFNSRLFLGTGKFSSNEWMEQSILASGTEMVTVAMKRVDMESTEDDMLKHIVHPHIQLLPNTSGVRNAEEAVFAAQMAREAFGTNWLKLEIHPDPRYLLPDSVETLKATEELVKLGFVVLPYCQADPVLCKQLEEAGAATVMPLGAPIGTNKGLQTKEFLQIIIEQAGIPVVVDAGIGAPSHAAEAMEMGASACLVNTAIAVAGNPIEMAKAFKQAVEAGRTAYEAGLGMQAIGFVAEASSPLTAFLNE</sequence>
<reference key="1">
    <citation type="journal article" date="2004" name="Proc. Natl. Acad. Sci. U.S.A.">
        <title>Genomic analysis of Bacteroides fragilis reveals extensive DNA inversions regulating cell surface adaptation.</title>
        <authorList>
            <person name="Kuwahara T."/>
            <person name="Yamashita A."/>
            <person name="Hirakawa H."/>
            <person name="Nakayama H."/>
            <person name="Toh H."/>
            <person name="Okada N."/>
            <person name="Kuhara S."/>
            <person name="Hattori M."/>
            <person name="Hayashi T."/>
            <person name="Ohnishi Y."/>
        </authorList>
    </citation>
    <scope>NUCLEOTIDE SEQUENCE [LARGE SCALE GENOMIC DNA]</scope>
    <source>
        <strain>YCH46</strain>
    </source>
</reference>
<organism>
    <name type="scientific">Bacteroides fragilis (strain YCH46)</name>
    <dbReference type="NCBI Taxonomy" id="295405"/>
    <lineage>
        <taxon>Bacteria</taxon>
        <taxon>Pseudomonadati</taxon>
        <taxon>Bacteroidota</taxon>
        <taxon>Bacteroidia</taxon>
        <taxon>Bacteroidales</taxon>
        <taxon>Bacteroidaceae</taxon>
        <taxon>Bacteroides</taxon>
    </lineage>
</organism>
<gene>
    <name evidence="1" type="primary">thiG</name>
    <name type="ordered locus">BF2530</name>
</gene>
<dbReference type="EC" id="2.8.1.10" evidence="1"/>
<dbReference type="EMBL" id="AP006841">
    <property type="protein sequence ID" value="BAD49279.1"/>
    <property type="molecule type" value="Genomic_DNA"/>
</dbReference>
<dbReference type="RefSeq" id="WP_005788045.1">
    <property type="nucleotide sequence ID" value="NC_006347.1"/>
</dbReference>
<dbReference type="RefSeq" id="YP_099813.1">
    <property type="nucleotide sequence ID" value="NC_006347.1"/>
</dbReference>
<dbReference type="SMR" id="Q64TA0"/>
<dbReference type="STRING" id="295405.BF2530"/>
<dbReference type="KEGG" id="bfr:BF2530"/>
<dbReference type="PATRIC" id="fig|295405.11.peg.2436"/>
<dbReference type="HOGENOM" id="CLU_062233_1_0_10"/>
<dbReference type="OrthoDB" id="9805935at2"/>
<dbReference type="UniPathway" id="UPA00060"/>
<dbReference type="Proteomes" id="UP000002197">
    <property type="component" value="Chromosome"/>
</dbReference>
<dbReference type="GO" id="GO:0005737">
    <property type="term" value="C:cytoplasm"/>
    <property type="evidence" value="ECO:0007669"/>
    <property type="project" value="UniProtKB-SubCell"/>
</dbReference>
<dbReference type="GO" id="GO:1990107">
    <property type="term" value="F:thiazole synthase activity"/>
    <property type="evidence" value="ECO:0007669"/>
    <property type="project" value="UniProtKB-EC"/>
</dbReference>
<dbReference type="GO" id="GO:0009229">
    <property type="term" value="P:thiamine diphosphate biosynthetic process"/>
    <property type="evidence" value="ECO:0007669"/>
    <property type="project" value="UniProtKB-UniRule"/>
</dbReference>
<dbReference type="CDD" id="cd04728">
    <property type="entry name" value="ThiG"/>
    <property type="match status" value="1"/>
</dbReference>
<dbReference type="FunFam" id="3.20.20.70:FF:000049">
    <property type="entry name" value="Thiazole synthase"/>
    <property type="match status" value="1"/>
</dbReference>
<dbReference type="Gene3D" id="3.20.20.70">
    <property type="entry name" value="Aldolase class I"/>
    <property type="match status" value="1"/>
</dbReference>
<dbReference type="HAMAP" id="MF_00443">
    <property type="entry name" value="ThiG"/>
    <property type="match status" value="1"/>
</dbReference>
<dbReference type="InterPro" id="IPR013785">
    <property type="entry name" value="Aldolase_TIM"/>
</dbReference>
<dbReference type="InterPro" id="IPR033983">
    <property type="entry name" value="Thiazole_synthase_ThiG"/>
</dbReference>
<dbReference type="InterPro" id="IPR008867">
    <property type="entry name" value="ThiG"/>
</dbReference>
<dbReference type="PANTHER" id="PTHR34266">
    <property type="entry name" value="THIAZOLE SYNTHASE"/>
    <property type="match status" value="1"/>
</dbReference>
<dbReference type="PANTHER" id="PTHR34266:SF2">
    <property type="entry name" value="THIAZOLE SYNTHASE"/>
    <property type="match status" value="1"/>
</dbReference>
<dbReference type="Pfam" id="PF05690">
    <property type="entry name" value="ThiG"/>
    <property type="match status" value="1"/>
</dbReference>
<dbReference type="SUPFAM" id="SSF110399">
    <property type="entry name" value="ThiG-like"/>
    <property type="match status" value="1"/>
</dbReference>
<name>THIG_BACFR</name>
<accession>Q64TA0</accession>